<feature type="chain" id="PRO_1000093888" description="Holo-[acyl-carrier-protein] synthase">
    <location>
        <begin position="1"/>
        <end position="120"/>
    </location>
</feature>
<feature type="binding site" evidence="1">
    <location>
        <position position="8"/>
    </location>
    <ligand>
        <name>Mg(2+)</name>
        <dbReference type="ChEBI" id="CHEBI:18420"/>
    </ligand>
</feature>
<feature type="binding site" evidence="1">
    <location>
        <position position="58"/>
    </location>
    <ligand>
        <name>Mg(2+)</name>
        <dbReference type="ChEBI" id="CHEBI:18420"/>
    </ligand>
</feature>
<proteinExistence type="inferred from homology"/>
<comment type="function">
    <text evidence="1">Transfers the 4'-phosphopantetheine moiety from coenzyme A to a Ser of acyl-carrier-protein.</text>
</comment>
<comment type="catalytic activity">
    <reaction evidence="1">
        <text>apo-[ACP] + CoA = holo-[ACP] + adenosine 3',5'-bisphosphate + H(+)</text>
        <dbReference type="Rhea" id="RHEA:12068"/>
        <dbReference type="Rhea" id="RHEA-COMP:9685"/>
        <dbReference type="Rhea" id="RHEA-COMP:9690"/>
        <dbReference type="ChEBI" id="CHEBI:15378"/>
        <dbReference type="ChEBI" id="CHEBI:29999"/>
        <dbReference type="ChEBI" id="CHEBI:57287"/>
        <dbReference type="ChEBI" id="CHEBI:58343"/>
        <dbReference type="ChEBI" id="CHEBI:64479"/>
        <dbReference type="EC" id="2.7.8.7"/>
    </reaction>
</comment>
<comment type="cofactor">
    <cofactor evidence="1">
        <name>Mg(2+)</name>
        <dbReference type="ChEBI" id="CHEBI:18420"/>
    </cofactor>
</comment>
<comment type="subcellular location">
    <subcellularLocation>
        <location evidence="1">Cytoplasm</location>
    </subcellularLocation>
</comment>
<comment type="similarity">
    <text evidence="1">Belongs to the P-Pant transferase superfamily. AcpS family.</text>
</comment>
<accession>B2G5M8</accession>
<protein>
    <recommendedName>
        <fullName evidence="1">Holo-[acyl-carrier-protein] synthase</fullName>
        <shortName evidence="1">Holo-ACP synthase</shortName>
        <ecNumber evidence="1">2.7.8.7</ecNumber>
    </recommendedName>
    <alternativeName>
        <fullName evidence="1">4'-phosphopantetheinyl transferase AcpS</fullName>
    </alternativeName>
</protein>
<keyword id="KW-0963">Cytoplasm</keyword>
<keyword id="KW-0275">Fatty acid biosynthesis</keyword>
<keyword id="KW-0276">Fatty acid metabolism</keyword>
<keyword id="KW-0444">Lipid biosynthesis</keyword>
<keyword id="KW-0443">Lipid metabolism</keyword>
<keyword id="KW-0460">Magnesium</keyword>
<keyword id="KW-0479">Metal-binding</keyword>
<keyword id="KW-0808">Transferase</keyword>
<reference key="1">
    <citation type="journal article" date="2008" name="DNA Res.">
        <title>Comparative genome analysis of Lactobacillus reuteri and Lactobacillus fermentum reveal a genomic island for reuterin and cobalamin production.</title>
        <authorList>
            <person name="Morita H."/>
            <person name="Toh H."/>
            <person name="Fukuda S."/>
            <person name="Horikawa H."/>
            <person name="Oshima K."/>
            <person name="Suzuki T."/>
            <person name="Murakami M."/>
            <person name="Hisamatsu S."/>
            <person name="Kato Y."/>
            <person name="Takizawa T."/>
            <person name="Fukuoka H."/>
            <person name="Yoshimura T."/>
            <person name="Itoh K."/>
            <person name="O'Sullivan D.J."/>
            <person name="McKay L.L."/>
            <person name="Ohno H."/>
            <person name="Kikuchi J."/>
            <person name="Masaoka T."/>
            <person name="Hattori M."/>
        </authorList>
    </citation>
    <scope>NUCLEOTIDE SEQUENCE [LARGE SCALE GENOMIC DNA]</scope>
    <source>
        <strain>JCM 1112</strain>
    </source>
</reference>
<name>ACPS_LIMRJ</name>
<evidence type="ECO:0000255" key="1">
    <source>
        <dbReference type="HAMAP-Rule" id="MF_00101"/>
    </source>
</evidence>
<organism>
    <name type="scientific">Limosilactobacillus reuteri subsp. reuteri (strain JCM 1112)</name>
    <name type="common">Lactobacillus reuteri</name>
    <dbReference type="NCBI Taxonomy" id="557433"/>
    <lineage>
        <taxon>Bacteria</taxon>
        <taxon>Bacillati</taxon>
        <taxon>Bacillota</taxon>
        <taxon>Bacilli</taxon>
        <taxon>Lactobacillales</taxon>
        <taxon>Lactobacillaceae</taxon>
        <taxon>Limosilactobacillus</taxon>
    </lineage>
</organism>
<gene>
    <name evidence="1" type="primary">acpS</name>
    <name type="ordered locus">LAR_0244</name>
</gene>
<sequence>MIKGIGIDITEIERVKKAATAHSQFIQHVLTPTELEQYSQFSGQRSVEYLAGRWSLKESFAKAYGTGIGANLGFHDIEIIDNQYGAPIVTKSPYNGNAHASVSHTATLVMTEVILESENK</sequence>
<dbReference type="EC" id="2.7.8.7" evidence="1"/>
<dbReference type="EMBL" id="AP007281">
    <property type="protein sequence ID" value="BAG24760.1"/>
    <property type="molecule type" value="Genomic_DNA"/>
</dbReference>
<dbReference type="RefSeq" id="WP_003667247.1">
    <property type="nucleotide sequence ID" value="NC_010609.1"/>
</dbReference>
<dbReference type="SMR" id="B2G5M8"/>
<dbReference type="KEGG" id="lrf:LAR_0244"/>
<dbReference type="HOGENOM" id="CLU_089696_1_2_9"/>
<dbReference type="GO" id="GO:0005829">
    <property type="term" value="C:cytosol"/>
    <property type="evidence" value="ECO:0007669"/>
    <property type="project" value="TreeGrafter"/>
</dbReference>
<dbReference type="GO" id="GO:0008897">
    <property type="term" value="F:holo-[acyl-carrier-protein] synthase activity"/>
    <property type="evidence" value="ECO:0007669"/>
    <property type="project" value="UniProtKB-UniRule"/>
</dbReference>
<dbReference type="GO" id="GO:0000287">
    <property type="term" value="F:magnesium ion binding"/>
    <property type="evidence" value="ECO:0007669"/>
    <property type="project" value="UniProtKB-UniRule"/>
</dbReference>
<dbReference type="GO" id="GO:0006633">
    <property type="term" value="P:fatty acid biosynthetic process"/>
    <property type="evidence" value="ECO:0007669"/>
    <property type="project" value="UniProtKB-UniRule"/>
</dbReference>
<dbReference type="GO" id="GO:0019878">
    <property type="term" value="P:lysine biosynthetic process via aminoadipic acid"/>
    <property type="evidence" value="ECO:0007669"/>
    <property type="project" value="TreeGrafter"/>
</dbReference>
<dbReference type="Gene3D" id="3.90.470.20">
    <property type="entry name" value="4'-phosphopantetheinyl transferase domain"/>
    <property type="match status" value="1"/>
</dbReference>
<dbReference type="HAMAP" id="MF_00101">
    <property type="entry name" value="AcpS"/>
    <property type="match status" value="1"/>
</dbReference>
<dbReference type="InterPro" id="IPR008278">
    <property type="entry name" value="4-PPantetheinyl_Trfase_dom"/>
</dbReference>
<dbReference type="InterPro" id="IPR037143">
    <property type="entry name" value="4-PPantetheinyl_Trfase_dom_sf"/>
</dbReference>
<dbReference type="InterPro" id="IPR002582">
    <property type="entry name" value="ACPS"/>
</dbReference>
<dbReference type="InterPro" id="IPR050559">
    <property type="entry name" value="P-Pant_transferase_sf"/>
</dbReference>
<dbReference type="InterPro" id="IPR004568">
    <property type="entry name" value="Ppantetheine-prot_Trfase_dom"/>
</dbReference>
<dbReference type="NCBIfam" id="TIGR00516">
    <property type="entry name" value="acpS"/>
    <property type="match status" value="1"/>
</dbReference>
<dbReference type="NCBIfam" id="TIGR00556">
    <property type="entry name" value="pantethn_trn"/>
    <property type="match status" value="1"/>
</dbReference>
<dbReference type="PANTHER" id="PTHR12215:SF10">
    <property type="entry name" value="L-AMINOADIPATE-SEMIALDEHYDE DEHYDROGENASE-PHOSPHOPANTETHEINYL TRANSFERASE"/>
    <property type="match status" value="1"/>
</dbReference>
<dbReference type="PANTHER" id="PTHR12215">
    <property type="entry name" value="PHOSPHOPANTETHEINE TRANSFERASE"/>
    <property type="match status" value="1"/>
</dbReference>
<dbReference type="Pfam" id="PF01648">
    <property type="entry name" value="ACPS"/>
    <property type="match status" value="1"/>
</dbReference>
<dbReference type="SUPFAM" id="SSF56214">
    <property type="entry name" value="4'-phosphopantetheinyl transferase"/>
    <property type="match status" value="1"/>
</dbReference>